<protein>
    <recommendedName>
        <fullName evidence="1">Zinc transporter ZupT</fullName>
    </recommendedName>
</protein>
<organism>
    <name type="scientific">Corynebacterium efficiens (strain DSM 44549 / YS-314 / AJ 12310 / JCM 11189 / NBRC 100395)</name>
    <dbReference type="NCBI Taxonomy" id="196164"/>
    <lineage>
        <taxon>Bacteria</taxon>
        <taxon>Bacillati</taxon>
        <taxon>Actinomycetota</taxon>
        <taxon>Actinomycetes</taxon>
        <taxon>Mycobacteriales</taxon>
        <taxon>Corynebacteriaceae</taxon>
        <taxon>Corynebacterium</taxon>
    </lineage>
</organism>
<proteinExistence type="inferred from homology"/>
<comment type="function">
    <text evidence="1">Mediates zinc uptake. May also transport other divalent cations.</text>
</comment>
<comment type="catalytic activity">
    <reaction evidence="1">
        <text>Zn(2+)(in) = Zn(2+)(out)</text>
        <dbReference type="Rhea" id="RHEA:29351"/>
        <dbReference type="ChEBI" id="CHEBI:29105"/>
    </reaction>
</comment>
<comment type="subcellular location">
    <subcellularLocation>
        <location evidence="1">Cell membrane</location>
        <topology evidence="1">Multi-pass membrane protein</topology>
    </subcellularLocation>
</comment>
<comment type="similarity">
    <text evidence="1">Belongs to the ZIP transporter (TC 2.A.5) family. ZupT subfamily.</text>
</comment>
<sequence>MDWSNIIFAFSLTLFAGLATGVGGVIAVARKAPGERFLAGSLGFSVGVMLFVSFVEILPKAVEELTGVWGERGGNWAATGAFFAGIALIAVIDRLVPTAINPHEPSTVGGAVEGYERRSRMMRAGVLTAIAISIHNFPEGFATFVAGLTDPRIAIPVAVAIAIHNIPEGIAVAVPIREATGSRGKALKWATLSGLAEPAGAVVGFILLMPFLGPEAMGLSFAAVAGIMVFISLDELLPTAISSGRHHTAIYGLVGGMAVMAVSLLLFI</sequence>
<feature type="chain" id="PRO_0000207269" description="Zinc transporter ZupT">
    <location>
        <begin position="1"/>
        <end position="268"/>
    </location>
</feature>
<feature type="transmembrane region" description="Helical" evidence="1">
    <location>
        <begin position="6"/>
        <end position="26"/>
    </location>
</feature>
<feature type="transmembrane region" description="Helical" evidence="1">
    <location>
        <begin position="37"/>
        <end position="57"/>
    </location>
</feature>
<feature type="transmembrane region" description="Helical" evidence="1">
    <location>
        <begin position="73"/>
        <end position="93"/>
    </location>
</feature>
<feature type="transmembrane region" description="Helical" evidence="1">
    <location>
        <begin position="126"/>
        <end position="146"/>
    </location>
</feature>
<feature type="transmembrane region" description="Helical" evidence="1">
    <location>
        <begin position="153"/>
        <end position="173"/>
    </location>
</feature>
<feature type="transmembrane region" description="Helical" evidence="1">
    <location>
        <begin position="189"/>
        <end position="209"/>
    </location>
</feature>
<feature type="transmembrane region" description="Helical" evidence="1">
    <location>
        <begin position="211"/>
        <end position="231"/>
    </location>
</feature>
<feature type="transmembrane region" description="Helical" evidence="1">
    <location>
        <begin position="248"/>
        <end position="268"/>
    </location>
</feature>
<feature type="binding site" description="M2 metal binding site" evidence="1">
    <location>
        <position position="136"/>
    </location>
    <ligand>
        <name>Fe(2+)</name>
        <dbReference type="ChEBI" id="CHEBI:29033"/>
    </ligand>
</feature>
<feature type="binding site" description="M2 metal binding site" evidence="1">
    <location>
        <position position="139"/>
    </location>
    <ligand>
        <name>Fe(2+)</name>
        <dbReference type="ChEBI" id="CHEBI:29033"/>
    </ligand>
</feature>
<feature type="binding site" description="M1 metal binding site" evidence="1">
    <location>
        <position position="139"/>
    </location>
    <ligand>
        <name>Zn(2+)</name>
        <dbReference type="ChEBI" id="CHEBI:29105"/>
    </ligand>
</feature>
<feature type="binding site" description="M1 metal binding site" evidence="1">
    <location>
        <position position="164"/>
    </location>
    <ligand>
        <name>Zn(2+)</name>
        <dbReference type="ChEBI" id="CHEBI:29105"/>
    </ligand>
</feature>
<feature type="binding site" description="M2 metal binding site" evidence="1">
    <location>
        <position position="165"/>
    </location>
    <ligand>
        <name>Fe(2+)</name>
        <dbReference type="ChEBI" id="CHEBI:29033"/>
    </ligand>
</feature>
<feature type="binding site" description="M2 metal binding site" evidence="1">
    <location>
        <position position="168"/>
    </location>
    <ligand>
        <name>Fe(2+)</name>
        <dbReference type="ChEBI" id="CHEBI:29033"/>
    </ligand>
</feature>
<feature type="binding site" description="M1 metal binding site" evidence="1">
    <location>
        <position position="168"/>
    </location>
    <ligand>
        <name>Zn(2+)</name>
        <dbReference type="ChEBI" id="CHEBI:29105"/>
    </ligand>
</feature>
<feature type="binding site" description="M2 metal binding site" evidence="1">
    <location>
        <position position="197"/>
    </location>
    <ligand>
        <name>Fe(2+)</name>
        <dbReference type="ChEBI" id="CHEBI:29033"/>
    </ligand>
</feature>
<dbReference type="EMBL" id="BA000035">
    <property type="protein sequence ID" value="BAC18376.1"/>
    <property type="molecule type" value="Genomic_DNA"/>
</dbReference>
<dbReference type="RefSeq" id="WP_011075511.1">
    <property type="nucleotide sequence ID" value="NC_004369.1"/>
</dbReference>
<dbReference type="SMR" id="Q8FTK0"/>
<dbReference type="STRING" id="196164.gene:10741984"/>
<dbReference type="KEGG" id="cef:CE1566"/>
<dbReference type="eggNOG" id="COG0428">
    <property type="taxonomic scope" value="Bacteria"/>
</dbReference>
<dbReference type="HOGENOM" id="CLU_015114_1_3_11"/>
<dbReference type="Proteomes" id="UP000001409">
    <property type="component" value="Chromosome"/>
</dbReference>
<dbReference type="GO" id="GO:0005886">
    <property type="term" value="C:plasma membrane"/>
    <property type="evidence" value="ECO:0007669"/>
    <property type="project" value="UniProtKB-SubCell"/>
</dbReference>
<dbReference type="GO" id="GO:0046872">
    <property type="term" value="F:metal ion binding"/>
    <property type="evidence" value="ECO:0007669"/>
    <property type="project" value="UniProtKB-KW"/>
</dbReference>
<dbReference type="GO" id="GO:0005385">
    <property type="term" value="F:zinc ion transmembrane transporter activity"/>
    <property type="evidence" value="ECO:0007669"/>
    <property type="project" value="UniProtKB-UniRule"/>
</dbReference>
<dbReference type="HAMAP" id="MF_00548">
    <property type="entry name" value="ZupT"/>
    <property type="match status" value="1"/>
</dbReference>
<dbReference type="InterPro" id="IPR003689">
    <property type="entry name" value="ZIP"/>
</dbReference>
<dbReference type="InterPro" id="IPR023498">
    <property type="entry name" value="Zn_transptr_ZupT"/>
</dbReference>
<dbReference type="NCBIfam" id="NF003243">
    <property type="entry name" value="PRK04201.1"/>
    <property type="match status" value="1"/>
</dbReference>
<dbReference type="PANTHER" id="PTHR11040:SF205">
    <property type="entry name" value="ZINC TRANSPORTER ZUPT"/>
    <property type="match status" value="1"/>
</dbReference>
<dbReference type="PANTHER" id="PTHR11040">
    <property type="entry name" value="ZINC/IRON TRANSPORTER"/>
    <property type="match status" value="1"/>
</dbReference>
<dbReference type="Pfam" id="PF02535">
    <property type="entry name" value="Zip"/>
    <property type="match status" value="1"/>
</dbReference>
<keyword id="KW-1003">Cell membrane</keyword>
<keyword id="KW-0406">Ion transport</keyword>
<keyword id="KW-0408">Iron</keyword>
<keyword id="KW-0472">Membrane</keyword>
<keyword id="KW-0479">Metal-binding</keyword>
<keyword id="KW-1185">Reference proteome</keyword>
<keyword id="KW-0812">Transmembrane</keyword>
<keyword id="KW-1133">Transmembrane helix</keyword>
<keyword id="KW-0813">Transport</keyword>
<keyword id="KW-0862">Zinc</keyword>
<keyword id="KW-0864">Zinc transport</keyword>
<name>ZUPT_COREF</name>
<evidence type="ECO:0000255" key="1">
    <source>
        <dbReference type="HAMAP-Rule" id="MF_00548"/>
    </source>
</evidence>
<reference key="1">
    <citation type="journal article" date="2003" name="Genome Res.">
        <title>Comparative complete genome sequence analysis of the amino acid replacements responsible for the thermostability of Corynebacterium efficiens.</title>
        <authorList>
            <person name="Nishio Y."/>
            <person name="Nakamura Y."/>
            <person name="Kawarabayasi Y."/>
            <person name="Usuda Y."/>
            <person name="Kimura E."/>
            <person name="Sugimoto S."/>
            <person name="Matsui K."/>
            <person name="Yamagishi A."/>
            <person name="Kikuchi H."/>
            <person name="Ikeo K."/>
            <person name="Gojobori T."/>
        </authorList>
    </citation>
    <scope>NUCLEOTIDE SEQUENCE [LARGE SCALE GENOMIC DNA]</scope>
    <source>
        <strain>DSM 44549 / YS-314 / AJ 12310 / JCM 11189 / NBRC 100395</strain>
    </source>
</reference>
<accession>Q8FTK0</accession>
<gene>
    <name evidence="1" type="primary">zupT</name>
    <name type="ordered locus">CE1566</name>
</gene>